<evidence type="ECO:0000255" key="1">
    <source>
        <dbReference type="HAMAP-Rule" id="MF_01244"/>
    </source>
</evidence>
<gene>
    <name evidence="1" type="primary">aroB'</name>
    <name type="ordered locus">Mboo_1559</name>
</gene>
<accession>A7I8L5</accession>
<sequence length="329" mass="34636">MKQFWVDARPWNKDVVTTAIESGADAVVAEKAADVKRLGRITTVAPDGDLVPGKDVIECTITDKASENEAAANGKNRIVIVTTSDWTVIPLENLVAQSDKIIAEVKNVHEAELAIHVLEKGVYGILLKTSDPAVVKAVAALVKSTSGSVQLVPFTVTKIHPVGMGDRVCVDTCSMLADGDGMLMGNTSSAMLLVHAETLENPYVAPRPFRVNAGAVHAYILLPDGKTAYLADLSIGGQVLVSDHKGAGRSAIVGRTKIERRPLLLVEATAEGGAKASLILQNAETIRLVAPDGSAISVVNLAPGNKILGCALEGGRHFGMAVKETIREK</sequence>
<name>DHQS_METB6</name>
<keyword id="KW-0028">Amino-acid biosynthesis</keyword>
<keyword id="KW-0057">Aromatic amino acid biosynthesis</keyword>
<keyword id="KW-0520">NAD</keyword>
<keyword id="KW-0560">Oxidoreductase</keyword>
<keyword id="KW-1185">Reference proteome</keyword>
<feature type="chain" id="PRO_0000372052" description="3-dehydroquinate synthase">
    <location>
        <begin position="1"/>
        <end position="329"/>
    </location>
</feature>
<reference key="1">
    <citation type="journal article" date="2015" name="Microbiology">
        <title>Genome of Methanoregula boonei 6A8 reveals adaptations to oligotrophic peatland environments.</title>
        <authorList>
            <person name="Braeuer S."/>
            <person name="Cadillo-Quiroz H."/>
            <person name="Kyrpides N."/>
            <person name="Woyke T."/>
            <person name="Goodwin L."/>
            <person name="Detter C."/>
            <person name="Podell S."/>
            <person name="Yavitt J.B."/>
            <person name="Zinder S.H."/>
        </authorList>
    </citation>
    <scope>NUCLEOTIDE SEQUENCE [LARGE SCALE GENOMIC DNA]</scope>
    <source>
        <strain>DSM 21154 / JCM 14090 / 6A8</strain>
    </source>
</reference>
<proteinExistence type="inferred from homology"/>
<dbReference type="EC" id="1.4.1.24" evidence="1"/>
<dbReference type="EMBL" id="CP000780">
    <property type="protein sequence ID" value="ABS56076.1"/>
    <property type="molecule type" value="Genomic_DNA"/>
</dbReference>
<dbReference type="RefSeq" id="WP_012107118.1">
    <property type="nucleotide sequence ID" value="NC_009712.1"/>
</dbReference>
<dbReference type="STRING" id="456442.Mboo_1559"/>
<dbReference type="GeneID" id="5411246"/>
<dbReference type="KEGG" id="mbn:Mboo_1559"/>
<dbReference type="eggNOG" id="arCOG04353">
    <property type="taxonomic scope" value="Archaea"/>
</dbReference>
<dbReference type="HOGENOM" id="CLU_056379_0_0_2"/>
<dbReference type="OrthoDB" id="10265at2157"/>
<dbReference type="Proteomes" id="UP000002408">
    <property type="component" value="Chromosome"/>
</dbReference>
<dbReference type="GO" id="GO:0003856">
    <property type="term" value="F:3-dehydroquinate synthase activity"/>
    <property type="evidence" value="ECO:0007669"/>
    <property type="project" value="InterPro"/>
</dbReference>
<dbReference type="GO" id="GO:0102042">
    <property type="term" value="F:dehydroquinate synthase activity"/>
    <property type="evidence" value="ECO:0007669"/>
    <property type="project" value="UniProtKB-EC"/>
</dbReference>
<dbReference type="GO" id="GO:0051287">
    <property type="term" value="F:NAD binding"/>
    <property type="evidence" value="ECO:0007669"/>
    <property type="project" value="UniProtKB-UniRule"/>
</dbReference>
<dbReference type="GO" id="GO:0008652">
    <property type="term" value="P:amino acid biosynthetic process"/>
    <property type="evidence" value="ECO:0007669"/>
    <property type="project" value="UniProtKB-KW"/>
</dbReference>
<dbReference type="GO" id="GO:0009073">
    <property type="term" value="P:aromatic amino acid family biosynthetic process"/>
    <property type="evidence" value="ECO:0007669"/>
    <property type="project" value="UniProtKB-UniRule"/>
</dbReference>
<dbReference type="HAMAP" id="MF_01244">
    <property type="entry name" value="Arch_DHQ_synthase"/>
    <property type="match status" value="1"/>
</dbReference>
<dbReference type="InterPro" id="IPR002812">
    <property type="entry name" value="DHQ_synth"/>
</dbReference>
<dbReference type="NCBIfam" id="NF002627">
    <property type="entry name" value="PRK02290.1-5"/>
    <property type="match status" value="1"/>
</dbReference>
<dbReference type="PANTHER" id="PTHR33563">
    <property type="match status" value="1"/>
</dbReference>
<dbReference type="PANTHER" id="PTHR33563:SF1">
    <property type="entry name" value="3-DEHYDROQUINATE SYNTHASE"/>
    <property type="match status" value="1"/>
</dbReference>
<dbReference type="Pfam" id="PF01959">
    <property type="entry name" value="DHQS"/>
    <property type="match status" value="1"/>
</dbReference>
<dbReference type="PIRSF" id="PIRSF006655">
    <property type="entry name" value="DHQ_synth"/>
    <property type="match status" value="1"/>
</dbReference>
<comment type="function">
    <text evidence="1">Catalyzes the oxidative deamination and cyclization of 2-amino-3,7-dideoxy-D-threo-hept-6-ulosonic acid (ADH) to yield 3-dehydroquinate (DHQ), which is fed into the canonical shikimic pathway of aromatic amino acid biosynthesis.</text>
</comment>
<comment type="catalytic activity">
    <reaction evidence="1">
        <text>2-amino-2,3,7-trideoxy-D-lyxo-hept-6-ulosonate + NAD(+) + H2O = 3-dehydroquinate + NH4(+) + NADH + H(+)</text>
        <dbReference type="Rhea" id="RHEA:25956"/>
        <dbReference type="ChEBI" id="CHEBI:15377"/>
        <dbReference type="ChEBI" id="CHEBI:15378"/>
        <dbReference type="ChEBI" id="CHEBI:28938"/>
        <dbReference type="ChEBI" id="CHEBI:32364"/>
        <dbReference type="ChEBI" id="CHEBI:57540"/>
        <dbReference type="ChEBI" id="CHEBI:57945"/>
        <dbReference type="ChEBI" id="CHEBI:58859"/>
        <dbReference type="EC" id="1.4.1.24"/>
    </reaction>
</comment>
<comment type="similarity">
    <text evidence="1">Belongs to the archaeal-type DHQ synthase family.</text>
</comment>
<protein>
    <recommendedName>
        <fullName evidence="1">3-dehydroquinate synthase</fullName>
        <shortName evidence="1">DHQ synthase</shortName>
        <ecNumber evidence="1">1.4.1.24</ecNumber>
    </recommendedName>
    <alternativeName>
        <fullName evidence="1">3-dehydroquinate synthase II</fullName>
    </alternativeName>
</protein>
<organism>
    <name type="scientific">Methanoregula boonei (strain DSM 21154 / JCM 14090 / 6A8)</name>
    <dbReference type="NCBI Taxonomy" id="456442"/>
    <lineage>
        <taxon>Archaea</taxon>
        <taxon>Methanobacteriati</taxon>
        <taxon>Methanobacteriota</taxon>
        <taxon>Stenosarchaea group</taxon>
        <taxon>Methanomicrobia</taxon>
        <taxon>Methanomicrobiales</taxon>
        <taxon>Methanoregulaceae</taxon>
        <taxon>Methanoregula</taxon>
    </lineage>
</organism>